<accession>P38404</accession>
<evidence type="ECO:0000250" key="1"/>
<evidence type="ECO:0000255" key="2"/>
<evidence type="ECO:0000255" key="3">
    <source>
        <dbReference type="PROSITE-ProRule" id="PRU01230"/>
    </source>
</evidence>
<evidence type="ECO:0000305" key="4"/>
<reference key="1">
    <citation type="journal article" date="1990" name="Cell. Signal.">
        <title>Molecular cloning, sequencing and expression of cDNA encoding a G0-protein from insect.</title>
        <authorList>
            <person name="Raming K."/>
            <person name="Krieger J."/>
            <person name="Breer H."/>
        </authorList>
    </citation>
    <scope>NUCLEOTIDE SEQUENCE</scope>
</reference>
<dbReference type="PIR" id="A61035">
    <property type="entry name" value="A61035"/>
</dbReference>
<dbReference type="SMR" id="P38404"/>
<dbReference type="GO" id="GO:0005737">
    <property type="term" value="C:cytoplasm"/>
    <property type="evidence" value="ECO:0007669"/>
    <property type="project" value="TreeGrafter"/>
</dbReference>
<dbReference type="GO" id="GO:0005834">
    <property type="term" value="C:heterotrimeric G-protein complex"/>
    <property type="evidence" value="ECO:0007669"/>
    <property type="project" value="TreeGrafter"/>
</dbReference>
<dbReference type="GO" id="GO:0001664">
    <property type="term" value="F:G protein-coupled receptor binding"/>
    <property type="evidence" value="ECO:0007669"/>
    <property type="project" value="TreeGrafter"/>
</dbReference>
<dbReference type="GO" id="GO:0031683">
    <property type="term" value="F:G-protein beta/gamma-subunit complex binding"/>
    <property type="evidence" value="ECO:0007669"/>
    <property type="project" value="InterPro"/>
</dbReference>
<dbReference type="GO" id="GO:0005525">
    <property type="term" value="F:GTP binding"/>
    <property type="evidence" value="ECO:0007669"/>
    <property type="project" value="UniProtKB-KW"/>
</dbReference>
<dbReference type="GO" id="GO:0003924">
    <property type="term" value="F:GTPase activity"/>
    <property type="evidence" value="ECO:0007669"/>
    <property type="project" value="InterPro"/>
</dbReference>
<dbReference type="GO" id="GO:0046872">
    <property type="term" value="F:metal ion binding"/>
    <property type="evidence" value="ECO:0007669"/>
    <property type="project" value="UniProtKB-KW"/>
</dbReference>
<dbReference type="GO" id="GO:0007188">
    <property type="term" value="P:adenylate cyclase-modulating G protein-coupled receptor signaling pathway"/>
    <property type="evidence" value="ECO:0007669"/>
    <property type="project" value="InterPro"/>
</dbReference>
<dbReference type="CDD" id="cd00066">
    <property type="entry name" value="G-alpha"/>
    <property type="match status" value="1"/>
</dbReference>
<dbReference type="FunFam" id="1.10.400.10:FF:000001">
    <property type="entry name" value="Guanine nucleotide-binding protein G(I) subunit alpha"/>
    <property type="match status" value="1"/>
</dbReference>
<dbReference type="FunFam" id="3.40.50.300:FF:003559">
    <property type="entry name" value="Guanine nucleotide-binding protein G(i) subunit alpha-1"/>
    <property type="match status" value="1"/>
</dbReference>
<dbReference type="FunFam" id="3.40.50.300:FF:002307">
    <property type="entry name" value="Guanine nucleotide-binding protein G(k) subunit alpha"/>
    <property type="match status" value="1"/>
</dbReference>
<dbReference type="Gene3D" id="1.10.400.10">
    <property type="entry name" value="GI Alpha 1, domain 2-like"/>
    <property type="match status" value="1"/>
</dbReference>
<dbReference type="Gene3D" id="3.40.50.300">
    <property type="entry name" value="P-loop containing nucleotide triphosphate hydrolases"/>
    <property type="match status" value="1"/>
</dbReference>
<dbReference type="InterPro" id="IPR001408">
    <property type="entry name" value="Gprotein_alpha_I"/>
</dbReference>
<dbReference type="InterPro" id="IPR001019">
    <property type="entry name" value="Gprotein_alpha_su"/>
</dbReference>
<dbReference type="InterPro" id="IPR011025">
    <property type="entry name" value="GproteinA_insert"/>
</dbReference>
<dbReference type="InterPro" id="IPR027417">
    <property type="entry name" value="P-loop_NTPase"/>
</dbReference>
<dbReference type="PANTHER" id="PTHR10218:SF362">
    <property type="entry name" value="G PROTEIN ALPHA O SUBUNIT"/>
    <property type="match status" value="1"/>
</dbReference>
<dbReference type="PANTHER" id="PTHR10218">
    <property type="entry name" value="GTP-BINDING PROTEIN ALPHA SUBUNIT"/>
    <property type="match status" value="1"/>
</dbReference>
<dbReference type="Pfam" id="PF00503">
    <property type="entry name" value="G-alpha"/>
    <property type="match status" value="1"/>
</dbReference>
<dbReference type="PRINTS" id="PR00318">
    <property type="entry name" value="GPROTEINA"/>
</dbReference>
<dbReference type="PRINTS" id="PR00441">
    <property type="entry name" value="GPROTEINAI"/>
</dbReference>
<dbReference type="SMART" id="SM00275">
    <property type="entry name" value="G_alpha"/>
    <property type="match status" value="1"/>
</dbReference>
<dbReference type="SUPFAM" id="SSF52540">
    <property type="entry name" value="P-loop containing nucleoside triphosphate hydrolases"/>
    <property type="match status" value="1"/>
</dbReference>
<dbReference type="SUPFAM" id="SSF47895">
    <property type="entry name" value="Transducin (alpha subunit), insertion domain"/>
    <property type="match status" value="1"/>
</dbReference>
<dbReference type="PROSITE" id="PS51882">
    <property type="entry name" value="G_ALPHA"/>
    <property type="match status" value="1"/>
</dbReference>
<sequence length="354" mass="40337">MGCAMSAEERAALARSKQIEKNLKEDGLQAAKDIKLLLLGAGESGKSTIVKQMKIIHESGFTAEDFKQYRPVVYSNTIQSLVAILRAMPNLGISFCNNERETDAKMVFDVIQRMEDTEPFSEELLAAMKRLWADSGVQECFGRSNEYQLNDSAKYFLDDLDRLGAKDYQPTEQDILRTRVKTTGIVEVHFSFKNLNFKLFDVGGQRSERKKWIHCFEDVTAIIFCVAMSEYDQVLHEDETTNRMQESLKLFDSICNNKWFTDTSIILFLNKKDLFEEKIKKSPLTICFPEYAGAQEYGEAAAYIQAQFEAKNKSTTKEIYCHMTCATDTNNIQFVFDAVTDVIIANNLRGCGLY</sequence>
<protein>
    <recommendedName>
        <fullName>Guanine nucleotide-binding protein G(o) subunit alpha</fullName>
    </recommendedName>
</protein>
<organism>
    <name type="scientific">Locusta migratoria</name>
    <name type="common">Migratory locust</name>
    <dbReference type="NCBI Taxonomy" id="7004"/>
    <lineage>
        <taxon>Eukaryota</taxon>
        <taxon>Metazoa</taxon>
        <taxon>Ecdysozoa</taxon>
        <taxon>Arthropoda</taxon>
        <taxon>Hexapoda</taxon>
        <taxon>Insecta</taxon>
        <taxon>Pterygota</taxon>
        <taxon>Neoptera</taxon>
        <taxon>Polyneoptera</taxon>
        <taxon>Orthoptera</taxon>
        <taxon>Caelifera</taxon>
        <taxon>Acrididea</taxon>
        <taxon>Acridomorpha</taxon>
        <taxon>Acridoidea</taxon>
        <taxon>Acrididae</taxon>
        <taxon>Oedipodinae</taxon>
        <taxon>Locusta</taxon>
    </lineage>
</organism>
<name>GNAO_LOCMI</name>
<proteinExistence type="inferred from homology"/>
<comment type="function">
    <text>Guanine nucleotide-binding proteins (G proteins) are involved as modulators or transducers in various transmembrane signaling systems. The G(o) protein function is not clear.</text>
</comment>
<comment type="subunit">
    <text>G proteins are composed of 3 units; alpha, beta and gamma. The alpha chain contains the guanine nucleotide binding site.</text>
</comment>
<comment type="similarity">
    <text evidence="4">Belongs to the G-alpha family. G(i/o/t/z) subfamily.</text>
</comment>
<keyword id="KW-0342">GTP-binding</keyword>
<keyword id="KW-0449">Lipoprotein</keyword>
<keyword id="KW-0460">Magnesium</keyword>
<keyword id="KW-0479">Metal-binding</keyword>
<keyword id="KW-0519">Myristate</keyword>
<keyword id="KW-0547">Nucleotide-binding</keyword>
<keyword id="KW-0564">Palmitate</keyword>
<keyword id="KW-0807">Transducer</keyword>
<feature type="initiator methionine" description="Removed" evidence="1">
    <location>
        <position position="1"/>
    </location>
</feature>
<feature type="chain" id="PRO_0000203715" description="Guanine nucleotide-binding protein G(o) subunit alpha">
    <location>
        <begin position="2"/>
        <end position="354"/>
    </location>
</feature>
<feature type="domain" description="G-alpha" evidence="3">
    <location>
        <begin position="32"/>
        <end position="354"/>
    </location>
</feature>
<feature type="region of interest" description="G1 motif" evidence="3">
    <location>
        <begin position="35"/>
        <end position="48"/>
    </location>
</feature>
<feature type="region of interest" description="G2 motif" evidence="3">
    <location>
        <begin position="174"/>
        <end position="182"/>
    </location>
</feature>
<feature type="region of interest" description="G3 motif" evidence="3">
    <location>
        <begin position="197"/>
        <end position="206"/>
    </location>
</feature>
<feature type="region of interest" description="G4 motif" evidence="3">
    <location>
        <begin position="266"/>
        <end position="273"/>
    </location>
</feature>
<feature type="region of interest" description="G5 motif" evidence="3">
    <location>
        <begin position="324"/>
        <end position="329"/>
    </location>
</feature>
<feature type="binding site" evidence="1">
    <location>
        <begin position="40"/>
        <end position="47"/>
    </location>
    <ligand>
        <name>GTP</name>
        <dbReference type="ChEBI" id="CHEBI:37565"/>
    </ligand>
</feature>
<feature type="binding site" evidence="1">
    <location>
        <position position="47"/>
    </location>
    <ligand>
        <name>Mg(2+)</name>
        <dbReference type="ChEBI" id="CHEBI:18420"/>
    </ligand>
</feature>
<feature type="binding site" evidence="1">
    <location>
        <begin position="176"/>
        <end position="182"/>
    </location>
    <ligand>
        <name>GTP</name>
        <dbReference type="ChEBI" id="CHEBI:37565"/>
    </ligand>
</feature>
<feature type="binding site" evidence="1">
    <location>
        <position position="182"/>
    </location>
    <ligand>
        <name>Mg(2+)</name>
        <dbReference type="ChEBI" id="CHEBI:18420"/>
    </ligand>
</feature>
<feature type="binding site" evidence="1">
    <location>
        <begin position="201"/>
        <end position="205"/>
    </location>
    <ligand>
        <name>GTP</name>
        <dbReference type="ChEBI" id="CHEBI:37565"/>
    </ligand>
</feature>
<feature type="binding site" evidence="1">
    <location>
        <begin position="270"/>
        <end position="273"/>
    </location>
    <ligand>
        <name>GTP</name>
        <dbReference type="ChEBI" id="CHEBI:37565"/>
    </ligand>
</feature>
<feature type="binding site" evidence="1">
    <location>
        <position position="326"/>
    </location>
    <ligand>
        <name>GTP</name>
        <dbReference type="ChEBI" id="CHEBI:37565"/>
    </ligand>
</feature>
<feature type="lipid moiety-binding region" description="N-myristoyl glycine" evidence="2">
    <location>
        <position position="2"/>
    </location>
</feature>
<feature type="lipid moiety-binding region" description="S-palmitoyl cysteine" evidence="2">
    <location>
        <position position="3"/>
    </location>
</feature>